<gene>
    <name evidence="1" type="primary">fbp</name>
    <name type="ordered locus">Paes_1674</name>
</gene>
<sequence>MNKLITIERHFLEQQKSHPEATGELTDLLNDVAFAAKLVRREVVRAGLADILGMAGTTNVQGEEVKKLDLFANEKIINAIGEHGRFALMGSEENEGTIIPPNNDTGRYILLFDPLDGSSNIDVNVSVGTIFSIYRLTGDDPKEADINDCLQKGSEQVAAGYVIYGSSVMMVYTTGQGVHGFTYDPTIGEFLLSHENITTPERGKYYSINEGSLHQFNDSTVNFINYLKEDDEATGRPYSTRYIGSLVADFHRNLMTGGVFVYPATKGHPNGKLRLMYEANPLAFICEQAGGRATNGKERILDINPTELHQRTPLYIGSKEDVLKAEEFEKEG</sequence>
<evidence type="ECO:0000255" key="1">
    <source>
        <dbReference type="HAMAP-Rule" id="MF_01855"/>
    </source>
</evidence>
<comment type="catalytic activity">
    <reaction evidence="1">
        <text>beta-D-fructose 1,6-bisphosphate + H2O = beta-D-fructose 6-phosphate + phosphate</text>
        <dbReference type="Rhea" id="RHEA:11064"/>
        <dbReference type="ChEBI" id="CHEBI:15377"/>
        <dbReference type="ChEBI" id="CHEBI:32966"/>
        <dbReference type="ChEBI" id="CHEBI:43474"/>
        <dbReference type="ChEBI" id="CHEBI:57634"/>
        <dbReference type="EC" id="3.1.3.11"/>
    </reaction>
</comment>
<comment type="cofactor">
    <cofactor evidence="1">
        <name>Mg(2+)</name>
        <dbReference type="ChEBI" id="CHEBI:18420"/>
    </cofactor>
    <text evidence="1">Binds 2 magnesium ions per subunit.</text>
</comment>
<comment type="pathway">
    <text evidence="1">Carbohydrate biosynthesis; Calvin cycle.</text>
</comment>
<comment type="subunit">
    <text evidence="1">Homotetramer.</text>
</comment>
<comment type="subcellular location">
    <subcellularLocation>
        <location evidence="1">Cytoplasm</location>
    </subcellularLocation>
</comment>
<comment type="similarity">
    <text evidence="1">Belongs to the FBPase class 1 family.</text>
</comment>
<keyword id="KW-0113">Calvin cycle</keyword>
<keyword id="KW-0119">Carbohydrate metabolism</keyword>
<keyword id="KW-0963">Cytoplasm</keyword>
<keyword id="KW-0378">Hydrolase</keyword>
<keyword id="KW-0460">Magnesium</keyword>
<keyword id="KW-0479">Metal-binding</keyword>
<proteinExistence type="inferred from homology"/>
<protein>
    <recommendedName>
        <fullName evidence="1">Fructose-1,6-bisphosphatase class 1</fullName>
        <shortName evidence="1">FBPase class 1</shortName>
        <ecNumber evidence="1">3.1.3.11</ecNumber>
    </recommendedName>
    <alternativeName>
        <fullName evidence="1">D-fructose-1,6-bisphosphate 1-phosphohydrolase class 1</fullName>
    </alternativeName>
</protein>
<reference key="1">
    <citation type="submission" date="2008-06" db="EMBL/GenBank/DDBJ databases">
        <title>Complete sequence of chromosome of Prosthecochloris aestuarii DSM 271.</title>
        <authorList>
            <consortium name="US DOE Joint Genome Institute"/>
            <person name="Lucas S."/>
            <person name="Copeland A."/>
            <person name="Lapidus A."/>
            <person name="Glavina del Rio T."/>
            <person name="Dalin E."/>
            <person name="Tice H."/>
            <person name="Bruce D."/>
            <person name="Goodwin L."/>
            <person name="Pitluck S."/>
            <person name="Schmutz J."/>
            <person name="Larimer F."/>
            <person name="Land M."/>
            <person name="Hauser L."/>
            <person name="Kyrpides N."/>
            <person name="Anderson I."/>
            <person name="Liu Z."/>
            <person name="Li T."/>
            <person name="Zhao F."/>
            <person name="Overmann J."/>
            <person name="Bryant D.A."/>
            <person name="Richardson P."/>
        </authorList>
    </citation>
    <scope>NUCLEOTIDE SEQUENCE [LARGE SCALE GENOMIC DNA]</scope>
    <source>
        <strain>DSM 271 / SK 413</strain>
    </source>
</reference>
<name>F16PA_PROA2</name>
<dbReference type="EC" id="3.1.3.11" evidence="1"/>
<dbReference type="EMBL" id="CP001108">
    <property type="protein sequence ID" value="ACF46692.1"/>
    <property type="molecule type" value="Genomic_DNA"/>
</dbReference>
<dbReference type="RefSeq" id="WP_012506225.1">
    <property type="nucleotide sequence ID" value="NC_011059.1"/>
</dbReference>
<dbReference type="SMR" id="B4S3F3"/>
<dbReference type="STRING" id="290512.Paes_1674"/>
<dbReference type="KEGG" id="paa:Paes_1674"/>
<dbReference type="eggNOG" id="COG0158">
    <property type="taxonomic scope" value="Bacteria"/>
</dbReference>
<dbReference type="HOGENOM" id="CLU_039977_2_2_10"/>
<dbReference type="UniPathway" id="UPA00116"/>
<dbReference type="Proteomes" id="UP000002725">
    <property type="component" value="Chromosome"/>
</dbReference>
<dbReference type="GO" id="GO:0005829">
    <property type="term" value="C:cytosol"/>
    <property type="evidence" value="ECO:0007669"/>
    <property type="project" value="TreeGrafter"/>
</dbReference>
<dbReference type="GO" id="GO:0042132">
    <property type="term" value="F:fructose 1,6-bisphosphate 1-phosphatase activity"/>
    <property type="evidence" value="ECO:0007669"/>
    <property type="project" value="UniProtKB-UniRule"/>
</dbReference>
<dbReference type="GO" id="GO:0000287">
    <property type="term" value="F:magnesium ion binding"/>
    <property type="evidence" value="ECO:0007669"/>
    <property type="project" value="UniProtKB-UniRule"/>
</dbReference>
<dbReference type="GO" id="GO:0030388">
    <property type="term" value="P:fructose 1,6-bisphosphate metabolic process"/>
    <property type="evidence" value="ECO:0007669"/>
    <property type="project" value="TreeGrafter"/>
</dbReference>
<dbReference type="GO" id="GO:0006002">
    <property type="term" value="P:fructose 6-phosphate metabolic process"/>
    <property type="evidence" value="ECO:0007669"/>
    <property type="project" value="TreeGrafter"/>
</dbReference>
<dbReference type="GO" id="GO:0006000">
    <property type="term" value="P:fructose metabolic process"/>
    <property type="evidence" value="ECO:0007669"/>
    <property type="project" value="TreeGrafter"/>
</dbReference>
<dbReference type="GO" id="GO:0006094">
    <property type="term" value="P:gluconeogenesis"/>
    <property type="evidence" value="ECO:0007669"/>
    <property type="project" value="UniProtKB-UniRule"/>
</dbReference>
<dbReference type="GO" id="GO:0019253">
    <property type="term" value="P:reductive pentose-phosphate cycle"/>
    <property type="evidence" value="ECO:0007669"/>
    <property type="project" value="UniProtKB-UniRule"/>
</dbReference>
<dbReference type="GO" id="GO:0005986">
    <property type="term" value="P:sucrose biosynthetic process"/>
    <property type="evidence" value="ECO:0007669"/>
    <property type="project" value="TreeGrafter"/>
</dbReference>
<dbReference type="CDD" id="cd00354">
    <property type="entry name" value="FBPase"/>
    <property type="match status" value="1"/>
</dbReference>
<dbReference type="FunFam" id="3.30.540.10:FF:000002">
    <property type="entry name" value="Fructose-1,6-bisphosphatase class 1"/>
    <property type="match status" value="1"/>
</dbReference>
<dbReference type="FunFam" id="3.40.190.80:FF:000001">
    <property type="entry name" value="Fructose-1,6-bisphosphatase class 1"/>
    <property type="match status" value="1"/>
</dbReference>
<dbReference type="Gene3D" id="3.40.190.80">
    <property type="match status" value="1"/>
</dbReference>
<dbReference type="Gene3D" id="3.30.540.10">
    <property type="entry name" value="Fructose-1,6-Bisphosphatase, subunit A, domain 1"/>
    <property type="match status" value="1"/>
</dbReference>
<dbReference type="HAMAP" id="MF_01855">
    <property type="entry name" value="FBPase_class1"/>
    <property type="match status" value="1"/>
</dbReference>
<dbReference type="InterPro" id="IPR044015">
    <property type="entry name" value="FBPase_C_dom"/>
</dbReference>
<dbReference type="InterPro" id="IPR000146">
    <property type="entry name" value="FBPase_class-1"/>
</dbReference>
<dbReference type="InterPro" id="IPR033391">
    <property type="entry name" value="FBPase_N"/>
</dbReference>
<dbReference type="InterPro" id="IPR028343">
    <property type="entry name" value="FBPtase"/>
</dbReference>
<dbReference type="NCBIfam" id="NF006778">
    <property type="entry name" value="PRK09293.1-1"/>
    <property type="match status" value="1"/>
</dbReference>
<dbReference type="PANTHER" id="PTHR11556">
    <property type="entry name" value="FRUCTOSE-1,6-BISPHOSPHATASE-RELATED"/>
    <property type="match status" value="1"/>
</dbReference>
<dbReference type="PANTHER" id="PTHR11556:SF35">
    <property type="entry name" value="SEDOHEPTULOSE-1,7-BISPHOSPHATASE, CHLOROPLASTIC"/>
    <property type="match status" value="1"/>
</dbReference>
<dbReference type="Pfam" id="PF00316">
    <property type="entry name" value="FBPase"/>
    <property type="match status" value="1"/>
</dbReference>
<dbReference type="Pfam" id="PF18913">
    <property type="entry name" value="FBPase_C"/>
    <property type="match status" value="1"/>
</dbReference>
<dbReference type="PIRSF" id="PIRSF500210">
    <property type="entry name" value="FBPtase"/>
    <property type="match status" value="1"/>
</dbReference>
<dbReference type="PIRSF" id="PIRSF000904">
    <property type="entry name" value="FBPtase_SBPase"/>
    <property type="match status" value="1"/>
</dbReference>
<dbReference type="PRINTS" id="PR00115">
    <property type="entry name" value="F16BPHPHTASE"/>
</dbReference>
<dbReference type="SUPFAM" id="SSF56655">
    <property type="entry name" value="Carbohydrate phosphatase"/>
    <property type="match status" value="1"/>
</dbReference>
<feature type="chain" id="PRO_0000364633" description="Fructose-1,6-bisphosphatase class 1">
    <location>
        <begin position="1"/>
        <end position="332"/>
    </location>
</feature>
<feature type="binding site" evidence="1">
    <location>
        <position position="92"/>
    </location>
    <ligand>
        <name>Mg(2+)</name>
        <dbReference type="ChEBI" id="CHEBI:18420"/>
        <label>1</label>
    </ligand>
</feature>
<feature type="binding site" evidence="1">
    <location>
        <position position="113"/>
    </location>
    <ligand>
        <name>Mg(2+)</name>
        <dbReference type="ChEBI" id="CHEBI:18420"/>
        <label>1</label>
    </ligand>
</feature>
<feature type="binding site" evidence="1">
    <location>
        <position position="113"/>
    </location>
    <ligand>
        <name>Mg(2+)</name>
        <dbReference type="ChEBI" id="CHEBI:18420"/>
        <label>2</label>
    </ligand>
</feature>
<feature type="binding site" evidence="1">
    <location>
        <position position="115"/>
    </location>
    <ligand>
        <name>Mg(2+)</name>
        <dbReference type="ChEBI" id="CHEBI:18420"/>
        <label>1</label>
    </ligand>
</feature>
<feature type="binding site" evidence="1">
    <location>
        <begin position="116"/>
        <end position="119"/>
    </location>
    <ligand>
        <name>substrate</name>
    </ligand>
</feature>
<feature type="binding site" evidence="1">
    <location>
        <position position="116"/>
    </location>
    <ligand>
        <name>Mg(2+)</name>
        <dbReference type="ChEBI" id="CHEBI:18420"/>
        <label>2</label>
    </ligand>
</feature>
<feature type="binding site" evidence="1">
    <location>
        <position position="209"/>
    </location>
    <ligand>
        <name>substrate</name>
    </ligand>
</feature>
<feature type="binding site" evidence="1">
    <location>
        <position position="242"/>
    </location>
    <ligand>
        <name>substrate</name>
    </ligand>
</feature>
<feature type="binding site" evidence="1">
    <location>
        <position position="272"/>
    </location>
    <ligand>
        <name>substrate</name>
    </ligand>
</feature>
<feature type="binding site" evidence="1">
    <location>
        <position position="278"/>
    </location>
    <ligand>
        <name>Mg(2+)</name>
        <dbReference type="ChEBI" id="CHEBI:18420"/>
        <label>2</label>
    </ligand>
</feature>
<organism>
    <name type="scientific">Prosthecochloris aestuarii (strain DSM 271 / SK 413)</name>
    <dbReference type="NCBI Taxonomy" id="290512"/>
    <lineage>
        <taxon>Bacteria</taxon>
        <taxon>Pseudomonadati</taxon>
        <taxon>Chlorobiota</taxon>
        <taxon>Chlorobiia</taxon>
        <taxon>Chlorobiales</taxon>
        <taxon>Chlorobiaceae</taxon>
        <taxon>Prosthecochloris</taxon>
    </lineage>
</organism>
<accession>B4S3F3</accession>